<feature type="chain" id="PRO_0000071752" description="V-type proton ATPase 16 kDa proteolipid subunit c">
    <location>
        <begin position="1"/>
        <end position="156"/>
    </location>
</feature>
<feature type="topological domain" description="Lumenal" evidence="4">
    <location>
        <begin position="1"/>
        <end position="7"/>
    </location>
</feature>
<feature type="transmembrane region" description="Helical" evidence="4">
    <location>
        <begin position="8"/>
        <end position="30"/>
    </location>
</feature>
<feature type="topological domain" description="Cytoplasmic" evidence="4">
    <location>
        <begin position="31"/>
        <end position="52"/>
    </location>
</feature>
<feature type="transmembrane region" description="Helical" evidence="4">
    <location>
        <begin position="53"/>
        <end position="73"/>
    </location>
</feature>
<feature type="topological domain" description="Lumenal" evidence="4">
    <location>
        <begin position="74"/>
        <end position="92"/>
    </location>
</feature>
<feature type="transmembrane region" description="Helical" evidence="4">
    <location>
        <begin position="93"/>
        <end position="114"/>
    </location>
</feature>
<feature type="topological domain" description="Cytoplasmic" evidence="4">
    <location>
        <begin position="115"/>
        <end position="126"/>
    </location>
</feature>
<feature type="transmembrane region" description="Helical" evidence="4">
    <location>
        <begin position="127"/>
        <end position="152"/>
    </location>
</feature>
<feature type="topological domain" description="Lumenal" evidence="4">
    <location>
        <begin position="153"/>
        <end position="156"/>
    </location>
</feature>
<feature type="site" description="Essential for proton translocation" evidence="3">
    <location>
        <position position="139"/>
    </location>
</feature>
<gene>
    <name type="primary">VHA16</name>
</gene>
<accession>P31403</accession>
<evidence type="ECO:0000250" key="1">
    <source>
        <dbReference type="UniProtKB" id="P23380"/>
    </source>
</evidence>
<evidence type="ECO:0000250" key="2">
    <source>
        <dbReference type="UniProtKB" id="P27449"/>
    </source>
</evidence>
<evidence type="ECO:0000250" key="3">
    <source>
        <dbReference type="UniProtKB" id="P63081"/>
    </source>
</evidence>
<evidence type="ECO:0000255" key="4"/>
<evidence type="ECO:0000305" key="5"/>
<organism>
    <name type="scientific">Manduca sexta</name>
    <name type="common">Tobacco hawkmoth</name>
    <name type="synonym">Tobacco hornworm</name>
    <dbReference type="NCBI Taxonomy" id="7130"/>
    <lineage>
        <taxon>Eukaryota</taxon>
        <taxon>Metazoa</taxon>
        <taxon>Ecdysozoa</taxon>
        <taxon>Arthropoda</taxon>
        <taxon>Hexapoda</taxon>
        <taxon>Insecta</taxon>
        <taxon>Pterygota</taxon>
        <taxon>Neoptera</taxon>
        <taxon>Endopterygota</taxon>
        <taxon>Lepidoptera</taxon>
        <taxon>Glossata</taxon>
        <taxon>Ditrysia</taxon>
        <taxon>Bombycoidea</taxon>
        <taxon>Sphingidae</taxon>
        <taxon>Sphinginae</taxon>
        <taxon>Sphingini</taxon>
        <taxon>Manduca</taxon>
    </lineage>
</organism>
<name>VATL_MANSE</name>
<comment type="function">
    <text evidence="1 2">Proton-conducting pore forming subunit of the V0 complex of vacuolar(H+)-ATPase (V-ATPase), a multisubunit enzyme composed of a peripheral complex (V1) that hydrolyzes ATP and a membrane integral complex (V0) that translocates protons (By similarity). V-ATPase is responsible for acidifying and maintaining the pH of intracellular compartments and in some cell types, is targeted to the plasma membrane, where it is responsible for acidifying the extracellular environment (By similarity).</text>
</comment>
<comment type="subunit">
    <text evidence="2">V-ATPase is a heteromultimeric enzyme made up of two complexes: the ATP-hydrolytic V1 complex and the proton translocation V0 complex (By similarity). The V1 complex consists of three catalytic AB heterodimers that form a heterohexamer, three peripheral stalks each consisting of EG heterodimers, one central rotor including subunits D and F, and the regulatory subunits C and H (By similarity). The proton translocation complex V0 consists of the proton transport subunit a, a ring of proteolipid subunits c9c'', rotary subunit d, subunits e and f, and the accessory subunits VhaAC45 and ATP6AP2 (By similarity).</text>
</comment>
<comment type="subcellular location">
    <subcellularLocation>
        <location evidence="4">Membrane</location>
        <topology evidence="4">Multi-pass membrane protein</topology>
    </subcellularLocation>
</comment>
<comment type="similarity">
    <text evidence="5">Belongs to the V-ATPase proteolipid subunit family.</text>
</comment>
<proteinExistence type="evidence at transcript level"/>
<protein>
    <recommendedName>
        <fullName evidence="5">V-type proton ATPase 16 kDa proteolipid subunit c</fullName>
        <shortName evidence="5">V-ATPase 16 kDa proteolipid subunit c</shortName>
    </recommendedName>
    <alternativeName>
        <fullName evidence="5">Vacuolar proton pump 16 kDa proteolipid subunit c</fullName>
    </alternativeName>
</protein>
<reference key="1">
    <citation type="journal article" date="1992" name="Gene">
        <title>Analysis of the gene encoding a 16-kDa proteolipid subunit of the vacuolar H(+)-ATPase from Manduca sexta midgut and tubules.</title>
        <authorList>
            <person name="Dow J.A.T."/>
            <person name="Goodwin S.F."/>
            <person name="Kaiser K."/>
        </authorList>
    </citation>
    <scope>NUCLEOTIDE SEQUENCE [MRNA]</scope>
    <source>
        <tissue>Midgut</tissue>
    </source>
</reference>
<sequence length="156" mass="15978">MAENPIYGPFFGVMGAASAIIFSALGAAYGTAKSGTGIAAMSVMRPELIMKSIIPVVMAGIIAIYGLVVAVLIAGSLDSPSNNYTLYRGFIHLGAGLAVGFSGLAAGFAIGIVGDAGVRGTAQQPRLFVGMILILIFAEVLGLYGLIVAIYLYTKQ</sequence>
<keyword id="KW-0375">Hydrogen ion transport</keyword>
<keyword id="KW-0406">Ion transport</keyword>
<keyword id="KW-0472">Membrane</keyword>
<keyword id="KW-0812">Transmembrane</keyword>
<keyword id="KW-1133">Transmembrane helix</keyword>
<keyword id="KW-0813">Transport</keyword>
<dbReference type="EMBL" id="X65051">
    <property type="protein sequence ID" value="CAA46187.1"/>
    <property type="molecule type" value="mRNA"/>
</dbReference>
<dbReference type="PIR" id="JN0456">
    <property type="entry name" value="JN0456"/>
</dbReference>
<dbReference type="SMR" id="P31403"/>
<dbReference type="DIP" id="DIP-61395N"/>
<dbReference type="IntAct" id="P31403">
    <property type="interactions" value="1"/>
</dbReference>
<dbReference type="EnsemblMetazoa" id="XM_030166922.2">
    <property type="protein sequence ID" value="XP_030022782.1"/>
    <property type="gene ID" value="LOC115441985"/>
</dbReference>
<dbReference type="OrthoDB" id="1744869at2759"/>
<dbReference type="GO" id="GO:0033179">
    <property type="term" value="C:proton-transporting V-type ATPase, V0 domain"/>
    <property type="evidence" value="ECO:0007669"/>
    <property type="project" value="InterPro"/>
</dbReference>
<dbReference type="GO" id="GO:0046961">
    <property type="term" value="F:proton-transporting ATPase activity, rotational mechanism"/>
    <property type="evidence" value="ECO:0007669"/>
    <property type="project" value="InterPro"/>
</dbReference>
<dbReference type="CDD" id="cd18175">
    <property type="entry name" value="ATP-synt_Vo_c_ATP6C_rpt1"/>
    <property type="match status" value="1"/>
</dbReference>
<dbReference type="CDD" id="cd18176">
    <property type="entry name" value="ATP-synt_Vo_c_ATP6C_rpt2"/>
    <property type="match status" value="1"/>
</dbReference>
<dbReference type="FunFam" id="1.20.120.610:FF:000001">
    <property type="entry name" value="V-type proton ATPase proteolipid subunit"/>
    <property type="match status" value="1"/>
</dbReference>
<dbReference type="Gene3D" id="1.20.120.610">
    <property type="entry name" value="lithium bound rotor ring of v- atpase"/>
    <property type="match status" value="1"/>
</dbReference>
<dbReference type="InterPro" id="IPR002379">
    <property type="entry name" value="ATPase_proteolipid_c-like_dom"/>
</dbReference>
<dbReference type="InterPro" id="IPR000245">
    <property type="entry name" value="ATPase_proteolipid_csu"/>
</dbReference>
<dbReference type="InterPro" id="IPR011555">
    <property type="entry name" value="ATPase_proteolipid_su_C_euk"/>
</dbReference>
<dbReference type="InterPro" id="IPR035921">
    <property type="entry name" value="F/V-ATP_Csub_sf"/>
</dbReference>
<dbReference type="NCBIfam" id="TIGR01100">
    <property type="entry name" value="V_ATP_synt_C"/>
    <property type="match status" value="1"/>
</dbReference>
<dbReference type="PANTHER" id="PTHR10263">
    <property type="entry name" value="V-TYPE PROTON ATPASE PROTEOLIPID SUBUNIT"/>
    <property type="match status" value="1"/>
</dbReference>
<dbReference type="Pfam" id="PF00137">
    <property type="entry name" value="ATP-synt_C"/>
    <property type="match status" value="2"/>
</dbReference>
<dbReference type="PRINTS" id="PR00122">
    <property type="entry name" value="VACATPASE"/>
</dbReference>
<dbReference type="SUPFAM" id="SSF81333">
    <property type="entry name" value="F1F0 ATP synthase subunit C"/>
    <property type="match status" value="2"/>
</dbReference>